<gene>
    <name type="primary">RPL19</name>
</gene>
<comment type="similarity">
    <text evidence="1">Belongs to the eukaryotic ribosomal protein eL19 family.</text>
</comment>
<name>RL19_MAIZE</name>
<proteinExistence type="evidence at transcript level"/>
<protein>
    <recommendedName>
        <fullName evidence="1">Large ribosomal subunit protein eL19</fullName>
    </recommendedName>
    <alternativeName>
        <fullName>60S ribosomal protein L19</fullName>
    </alternativeName>
</protein>
<feature type="chain" id="PRO_0000131182" description="Large ribosomal subunit protein eL19">
    <location>
        <begin position="1" status="less than"/>
        <end position="62" status="greater than"/>
    </location>
</feature>
<feature type="non-terminal residue">
    <location>
        <position position="1"/>
    </location>
</feature>
<feature type="non-terminal residue">
    <location>
        <position position="62"/>
    </location>
</feature>
<dbReference type="EMBL" id="M95065">
    <property type="protein sequence ID" value="AAA18552.1"/>
    <property type="molecule type" value="mRNA"/>
</dbReference>
<dbReference type="PIR" id="T03648">
    <property type="entry name" value="T03648"/>
</dbReference>
<dbReference type="SMR" id="Q08066"/>
<dbReference type="STRING" id="4577.Q08066"/>
<dbReference type="PaxDb" id="4577-GRMZM5G887054_P01"/>
<dbReference type="MaizeGDB" id="25469"/>
<dbReference type="eggNOG" id="KOG1696">
    <property type="taxonomic scope" value="Eukaryota"/>
</dbReference>
<dbReference type="InParanoid" id="Q08066"/>
<dbReference type="Proteomes" id="UP000007305">
    <property type="component" value="Unplaced"/>
</dbReference>
<dbReference type="ExpressionAtlas" id="Q08066">
    <property type="expression patterns" value="baseline and differential"/>
</dbReference>
<dbReference type="GO" id="GO:0022625">
    <property type="term" value="C:cytosolic large ribosomal subunit"/>
    <property type="evidence" value="ECO:0007669"/>
    <property type="project" value="InterPro"/>
</dbReference>
<dbReference type="GO" id="GO:0003723">
    <property type="term" value="F:RNA binding"/>
    <property type="evidence" value="ECO:0007669"/>
    <property type="project" value="InterPro"/>
</dbReference>
<dbReference type="GO" id="GO:0003735">
    <property type="term" value="F:structural constituent of ribosome"/>
    <property type="evidence" value="ECO:0007669"/>
    <property type="project" value="InterPro"/>
</dbReference>
<dbReference type="GO" id="GO:0006412">
    <property type="term" value="P:translation"/>
    <property type="evidence" value="ECO:0007669"/>
    <property type="project" value="InterPro"/>
</dbReference>
<dbReference type="FunFam" id="1.10.1650.10:FF:000001">
    <property type="entry name" value="Ribosomal protein L19"/>
    <property type="match status" value="1"/>
</dbReference>
<dbReference type="Gene3D" id="1.10.1650.10">
    <property type="match status" value="1"/>
</dbReference>
<dbReference type="InterPro" id="IPR035970">
    <property type="entry name" value="60S_ribosomal_eL19_sf"/>
</dbReference>
<dbReference type="InterPro" id="IPR039547">
    <property type="entry name" value="Ribosomal_eL19"/>
</dbReference>
<dbReference type="InterPro" id="IPR023638">
    <property type="entry name" value="Ribosomal_eL19_CS"/>
</dbReference>
<dbReference type="InterPro" id="IPR000196">
    <property type="entry name" value="Ribosomal_eL19_dom"/>
</dbReference>
<dbReference type="InterPro" id="IPR015972">
    <property type="entry name" value="Ribosomal_eL19_dom1"/>
</dbReference>
<dbReference type="PANTHER" id="PTHR10722">
    <property type="entry name" value="60S RIBOSOMAL PROTEIN L19"/>
    <property type="match status" value="1"/>
</dbReference>
<dbReference type="Pfam" id="PF01280">
    <property type="entry name" value="Ribosomal_L19e"/>
    <property type="match status" value="1"/>
</dbReference>
<dbReference type="SMART" id="SM01416">
    <property type="entry name" value="Ribosomal_L19e"/>
    <property type="match status" value="1"/>
</dbReference>
<dbReference type="SUPFAM" id="SSF48140">
    <property type="entry name" value="Ribosomal protein L19 (L19e)"/>
    <property type="match status" value="1"/>
</dbReference>
<dbReference type="PROSITE" id="PS00526">
    <property type="entry name" value="RIBOSOMAL_L19E"/>
    <property type="match status" value="1"/>
</dbReference>
<evidence type="ECO:0000305" key="1"/>
<accession>Q08066</accession>
<keyword id="KW-1185">Reference proteome</keyword>
<keyword id="KW-0687">Ribonucleoprotein</keyword>
<keyword id="KW-0689">Ribosomal protein</keyword>
<reference key="1">
    <citation type="journal article" date="1993" name="Plant Physiol.">
        <title>Partial sequence analysis of 130 randomly selected maize cDNA clones.</title>
        <authorList>
            <person name="Keith C.S."/>
            <person name="Hoang D.O."/>
            <person name="Barrett B.M."/>
            <person name="Feigelman B."/>
            <person name="Nelson M.C."/>
            <person name="Thai H."/>
            <person name="Baysdorfer C."/>
        </authorList>
    </citation>
    <scope>NUCLEOTIDE SEQUENCE [MRNA]</scope>
</reference>
<organism>
    <name type="scientific">Zea mays</name>
    <name type="common">Maize</name>
    <dbReference type="NCBI Taxonomy" id="4577"/>
    <lineage>
        <taxon>Eukaryota</taxon>
        <taxon>Viridiplantae</taxon>
        <taxon>Streptophyta</taxon>
        <taxon>Embryophyta</taxon>
        <taxon>Tracheophyta</taxon>
        <taxon>Spermatophyta</taxon>
        <taxon>Magnoliopsida</taxon>
        <taxon>Liliopsida</taxon>
        <taxon>Poales</taxon>
        <taxon>Poaceae</taxon>
        <taxon>PACMAD clade</taxon>
        <taxon>Panicoideae</taxon>
        <taxon>Andropogonodae</taxon>
        <taxon>Andropogoneae</taxon>
        <taxon>Tripsacinae</taxon>
        <taxon>Zea</taxon>
    </lineage>
</organism>
<sequence>LKLQKRLAASYLKCGKGKVWLDPNEVSEISMANSRQNIRKLVKDGFIIKKPHKIHSRSRCKK</sequence>